<comment type="similarity">
    <text evidence="1">Belongs to the universal ribosomal protein uL29 family.</text>
</comment>
<dbReference type="EMBL" id="CP001337">
    <property type="protein sequence ID" value="ACL25876.1"/>
    <property type="molecule type" value="Genomic_DNA"/>
</dbReference>
<dbReference type="RefSeq" id="WP_015941730.1">
    <property type="nucleotide sequence ID" value="NC_011831.1"/>
</dbReference>
<dbReference type="SMR" id="B8G6R7"/>
<dbReference type="STRING" id="326427.Cagg_3016"/>
<dbReference type="KEGG" id="cag:Cagg_3016"/>
<dbReference type="eggNOG" id="COG0255">
    <property type="taxonomic scope" value="Bacteria"/>
</dbReference>
<dbReference type="HOGENOM" id="CLU_158491_5_2_0"/>
<dbReference type="OrthoDB" id="9815192at2"/>
<dbReference type="Proteomes" id="UP000002508">
    <property type="component" value="Chromosome"/>
</dbReference>
<dbReference type="GO" id="GO:0022625">
    <property type="term" value="C:cytosolic large ribosomal subunit"/>
    <property type="evidence" value="ECO:0007669"/>
    <property type="project" value="TreeGrafter"/>
</dbReference>
<dbReference type="GO" id="GO:0003735">
    <property type="term" value="F:structural constituent of ribosome"/>
    <property type="evidence" value="ECO:0007669"/>
    <property type="project" value="InterPro"/>
</dbReference>
<dbReference type="GO" id="GO:0006412">
    <property type="term" value="P:translation"/>
    <property type="evidence" value="ECO:0007669"/>
    <property type="project" value="UniProtKB-UniRule"/>
</dbReference>
<dbReference type="CDD" id="cd00427">
    <property type="entry name" value="Ribosomal_L29_HIP"/>
    <property type="match status" value="1"/>
</dbReference>
<dbReference type="FunFam" id="1.10.287.310:FF:000001">
    <property type="entry name" value="50S ribosomal protein L29"/>
    <property type="match status" value="1"/>
</dbReference>
<dbReference type="Gene3D" id="1.10.287.310">
    <property type="match status" value="1"/>
</dbReference>
<dbReference type="HAMAP" id="MF_00374">
    <property type="entry name" value="Ribosomal_uL29"/>
    <property type="match status" value="1"/>
</dbReference>
<dbReference type="InterPro" id="IPR050063">
    <property type="entry name" value="Ribosomal_protein_uL29"/>
</dbReference>
<dbReference type="InterPro" id="IPR001854">
    <property type="entry name" value="Ribosomal_uL29"/>
</dbReference>
<dbReference type="InterPro" id="IPR036049">
    <property type="entry name" value="Ribosomal_uL29_sf"/>
</dbReference>
<dbReference type="NCBIfam" id="TIGR00012">
    <property type="entry name" value="L29"/>
    <property type="match status" value="1"/>
</dbReference>
<dbReference type="PANTHER" id="PTHR10916">
    <property type="entry name" value="60S RIBOSOMAL PROTEIN L35/50S RIBOSOMAL PROTEIN L29"/>
    <property type="match status" value="1"/>
</dbReference>
<dbReference type="PANTHER" id="PTHR10916:SF0">
    <property type="entry name" value="LARGE RIBOSOMAL SUBUNIT PROTEIN UL29C"/>
    <property type="match status" value="1"/>
</dbReference>
<dbReference type="Pfam" id="PF00831">
    <property type="entry name" value="Ribosomal_L29"/>
    <property type="match status" value="1"/>
</dbReference>
<dbReference type="SUPFAM" id="SSF46561">
    <property type="entry name" value="Ribosomal protein L29 (L29p)"/>
    <property type="match status" value="1"/>
</dbReference>
<name>RL29_CHLAD</name>
<organism>
    <name type="scientific">Chloroflexus aggregans (strain MD-66 / DSM 9485)</name>
    <dbReference type="NCBI Taxonomy" id="326427"/>
    <lineage>
        <taxon>Bacteria</taxon>
        <taxon>Bacillati</taxon>
        <taxon>Chloroflexota</taxon>
        <taxon>Chloroflexia</taxon>
        <taxon>Chloroflexales</taxon>
        <taxon>Chloroflexineae</taxon>
        <taxon>Chloroflexaceae</taxon>
        <taxon>Chloroflexus</taxon>
    </lineage>
</organism>
<sequence>MKASELRALDDAQLRAKLSEYKVELFNLRFQKATGKLTNTARPKQVKKDIARILTILRERELAQAELG</sequence>
<protein>
    <recommendedName>
        <fullName evidence="1">Large ribosomal subunit protein uL29</fullName>
    </recommendedName>
    <alternativeName>
        <fullName evidence="2">50S ribosomal protein L29</fullName>
    </alternativeName>
</protein>
<proteinExistence type="inferred from homology"/>
<accession>B8G6R7</accession>
<keyword id="KW-0687">Ribonucleoprotein</keyword>
<keyword id="KW-0689">Ribosomal protein</keyword>
<evidence type="ECO:0000255" key="1">
    <source>
        <dbReference type="HAMAP-Rule" id="MF_00374"/>
    </source>
</evidence>
<evidence type="ECO:0000305" key="2"/>
<reference key="1">
    <citation type="submission" date="2008-12" db="EMBL/GenBank/DDBJ databases">
        <title>Complete sequence of Chloroflexus aggregans DSM 9485.</title>
        <authorList>
            <consortium name="US DOE Joint Genome Institute"/>
            <person name="Lucas S."/>
            <person name="Copeland A."/>
            <person name="Lapidus A."/>
            <person name="Glavina del Rio T."/>
            <person name="Dalin E."/>
            <person name="Tice H."/>
            <person name="Pitluck S."/>
            <person name="Foster B."/>
            <person name="Larimer F."/>
            <person name="Land M."/>
            <person name="Hauser L."/>
            <person name="Kyrpides N."/>
            <person name="Mikhailova N."/>
            <person name="Bryant D.A."/>
            <person name="Richardson P."/>
        </authorList>
    </citation>
    <scope>NUCLEOTIDE SEQUENCE [LARGE SCALE GENOMIC DNA]</scope>
    <source>
        <strain>MD-66 / DSM 9485</strain>
    </source>
</reference>
<gene>
    <name evidence="1" type="primary">rpmC</name>
    <name type="ordered locus">Cagg_3016</name>
</gene>
<feature type="chain" id="PRO_1000194004" description="Large ribosomal subunit protein uL29">
    <location>
        <begin position="1"/>
        <end position="68"/>
    </location>
</feature>